<sequence length="180" mass="20648">MKMLLLLCLGLTLVCVHAEEASSTGRNFNVEKINGEWHTIILASDKREKIEDNGNFRLFLEQIHVLENSLVLKFHTVRDEECSELSMVADKTEKAGEYSVTYDGFNTFTIPKTDYDNFLMAHLINEKDGETFQLMGLYGREPDLSSDIKERFAQLCEKHGILRENIIDLSNANRCLQARE</sequence>
<evidence type="ECO:0000305" key="1"/>
<evidence type="ECO:0007829" key="2">
    <source>
        <dbReference type="PDB" id="1QY1"/>
    </source>
</evidence>
<evidence type="ECO:0007829" key="3">
    <source>
        <dbReference type="PDB" id="1YP7"/>
    </source>
</evidence>
<protein>
    <recommendedName>
        <fullName>Major urinary protein 1</fullName>
        <shortName>MUP 1</shortName>
    </recommendedName>
</protein>
<keyword id="KW-0002">3D-structure</keyword>
<keyword id="KW-1015">Disulfide bond</keyword>
<keyword id="KW-0590">Pheromone-binding</keyword>
<keyword id="KW-1185">Reference proteome</keyword>
<keyword id="KW-0964">Secreted</keyword>
<keyword id="KW-0732">Signal</keyword>
<keyword id="KW-0813">Transport</keyword>
<organism>
    <name type="scientific">Mus musculus</name>
    <name type="common">Mouse</name>
    <dbReference type="NCBI Taxonomy" id="10090"/>
    <lineage>
        <taxon>Eukaryota</taxon>
        <taxon>Metazoa</taxon>
        <taxon>Chordata</taxon>
        <taxon>Craniata</taxon>
        <taxon>Vertebrata</taxon>
        <taxon>Euteleostomi</taxon>
        <taxon>Mammalia</taxon>
        <taxon>Eutheria</taxon>
        <taxon>Euarchontoglires</taxon>
        <taxon>Glires</taxon>
        <taxon>Rodentia</taxon>
        <taxon>Myomorpha</taxon>
        <taxon>Muroidea</taxon>
        <taxon>Muridae</taxon>
        <taxon>Murinae</taxon>
        <taxon>Mus</taxon>
        <taxon>Mus</taxon>
    </lineage>
</organism>
<feature type="signal peptide">
    <location>
        <begin position="1"/>
        <end position="18"/>
    </location>
</feature>
<feature type="chain" id="PRO_0000017927" description="Major urinary protein 1">
    <location>
        <begin position="19"/>
        <end position="180"/>
    </location>
</feature>
<feature type="disulfide bond">
    <location>
        <begin position="82"/>
        <end position="175"/>
    </location>
</feature>
<feature type="sequence conflict" description="In Ref. 2; AAA39764." evidence="1" ref="2">
    <original>S</original>
    <variation>F</variation>
    <location>
        <position position="44"/>
    </location>
</feature>
<feature type="sequence conflict" description="In Ref. 2; AAA39764." evidence="1" ref="2">
    <original>K</original>
    <variation>N</variation>
    <location>
        <position position="127"/>
    </location>
</feature>
<feature type="helix" evidence="2">
    <location>
        <begin position="30"/>
        <end position="33"/>
    </location>
</feature>
<feature type="strand" evidence="2">
    <location>
        <begin position="38"/>
        <end position="46"/>
    </location>
</feature>
<feature type="helix" evidence="2">
    <location>
        <begin position="47"/>
        <end position="50"/>
    </location>
</feature>
<feature type="strand" evidence="2">
    <location>
        <begin position="59"/>
        <end position="65"/>
    </location>
</feature>
<feature type="strand" evidence="2">
    <location>
        <begin position="67"/>
        <end position="78"/>
    </location>
</feature>
<feature type="strand" evidence="2">
    <location>
        <begin position="81"/>
        <end position="91"/>
    </location>
</feature>
<feature type="strand" evidence="2">
    <location>
        <begin position="98"/>
        <end position="113"/>
    </location>
</feature>
<feature type="strand" evidence="2">
    <location>
        <begin position="115"/>
        <end position="127"/>
    </location>
</feature>
<feature type="strand" evidence="2">
    <location>
        <begin position="130"/>
        <end position="142"/>
    </location>
</feature>
<feature type="helix" evidence="2">
    <location>
        <begin position="146"/>
        <end position="157"/>
    </location>
</feature>
<feature type="turn" evidence="2">
    <location>
        <begin position="158"/>
        <end position="160"/>
    </location>
</feature>
<feature type="helix" evidence="2">
    <location>
        <begin position="163"/>
        <end position="165"/>
    </location>
</feature>
<feature type="strand" evidence="2">
    <location>
        <begin position="166"/>
        <end position="168"/>
    </location>
</feature>
<feature type="turn" evidence="3">
    <location>
        <begin position="170"/>
        <end position="172"/>
    </location>
</feature>
<accession>P11588</accession>
<accession>Q61921</accession>
<reference key="1">
    <citation type="journal article" date="1987" name="Mol. Cell. Biol.">
        <title>Nucleotide sequences of liver, lachrymal, and submaxillary gland mouse major urinary protein mRNAs: mosaic structure and construction of panels of gene-specific synthetic oligonucleotide probes.</title>
        <authorList>
            <person name="Shahan K."/>
            <person name="Gilmartin M."/>
            <person name="Derman E."/>
        </authorList>
    </citation>
    <scope>NUCLEOTIDE SEQUENCE [MRNA]</scope>
    <source>
        <strain>BALB/cJ</strain>
        <tissue>Liver</tissue>
    </source>
</reference>
<reference key="2">
    <citation type="journal article" date="1987" name="J. Cell Biol.">
        <title>Acquisition of antigens characteristic of adult pericentral hepatocytes by differentiating fetal hepatoblasts in vitro.</title>
        <authorList>
            <person name="Bennett A.L."/>
            <person name="Paulson K.E."/>
            <person name="Miller R.E."/>
            <person name="Darnell J.E. Jr."/>
        </authorList>
    </citation>
    <scope>NUCLEOTIDE SEQUENCE [MRNA]</scope>
    <source>
        <tissue>Liver</tissue>
    </source>
</reference>
<reference key="3">
    <citation type="journal article" date="2004" name="Genome Res.">
        <title>The status, quality, and expansion of the NIH full-length cDNA project: the Mammalian Gene Collection (MGC).</title>
        <authorList>
            <consortium name="The MGC Project Team"/>
        </authorList>
    </citation>
    <scope>NUCLEOTIDE SEQUENCE [LARGE SCALE MRNA]</scope>
    <source>
        <strain>FVB/N</strain>
        <tissue>Liver</tissue>
    </source>
</reference>
<reference key="4">
    <citation type="journal article" date="2005" name="J. Am. Chem. Soc.">
        <title>Van der Waals interactions dominate ligand-protein association in a protein binding site occluded from solvent water.</title>
        <authorList>
            <person name="Barratt E."/>
            <person name="Bingham R.J."/>
            <person name="Warner D.J."/>
            <person name="Laughton C.A."/>
            <person name="Phillips S.E."/>
            <person name="Homans S.W."/>
        </authorList>
    </citation>
    <scope>X-RAY CRYSTALLOGRAPHY (1.7 ANGSTROMS) OF 19-180</scope>
</reference>
<gene>
    <name type="primary">Mup1</name>
</gene>
<dbReference type="EMBL" id="M16355">
    <property type="protein sequence ID" value="AAA39767.1"/>
    <property type="molecule type" value="mRNA"/>
</dbReference>
<dbReference type="EMBL" id="M28649">
    <property type="protein sequence ID" value="AAA39764.1"/>
    <property type="status" value="ALT_INIT"/>
    <property type="molecule type" value="mRNA"/>
</dbReference>
<dbReference type="EMBL" id="BC012221">
    <property type="protein sequence ID" value="AAH12221.1"/>
    <property type="molecule type" value="mRNA"/>
</dbReference>
<dbReference type="CCDS" id="CCDS18231.1"/>
<dbReference type="RefSeq" id="NP_001186924.1">
    <property type="nucleotide sequence ID" value="NM_001199995.1"/>
</dbReference>
<dbReference type="PDB" id="1QY0">
    <property type="method" value="X-ray"/>
    <property type="resolution" value="1.80 A"/>
    <property type="chains" value="A=23-180"/>
</dbReference>
<dbReference type="PDB" id="1QY1">
    <property type="method" value="X-ray"/>
    <property type="resolution" value="1.70 A"/>
    <property type="chains" value="A=19-180"/>
</dbReference>
<dbReference type="PDB" id="1QY2">
    <property type="method" value="X-ray"/>
    <property type="resolution" value="1.75 A"/>
    <property type="chains" value="A=19-180"/>
</dbReference>
<dbReference type="PDB" id="1YP6">
    <property type="method" value="X-ray"/>
    <property type="resolution" value="1.80 A"/>
    <property type="chains" value="A=19-180"/>
</dbReference>
<dbReference type="PDB" id="1YP7">
    <property type="method" value="X-ray"/>
    <property type="resolution" value="2.00 A"/>
    <property type="chains" value="A=19-180"/>
</dbReference>
<dbReference type="PDB" id="2DM5">
    <property type="method" value="X-ray"/>
    <property type="resolution" value="1.70 A"/>
    <property type="chains" value="A=20-180"/>
</dbReference>
<dbReference type="PDBsum" id="1QY0"/>
<dbReference type="PDBsum" id="1QY1"/>
<dbReference type="PDBsum" id="1QY2"/>
<dbReference type="PDBsum" id="1YP6"/>
<dbReference type="PDBsum" id="1YP7"/>
<dbReference type="PDBsum" id="2DM5"/>
<dbReference type="BMRB" id="P11588"/>
<dbReference type="SMR" id="P11588"/>
<dbReference type="FunCoup" id="P11588">
    <property type="interactions" value="186"/>
</dbReference>
<dbReference type="STRING" id="10090.ENSMUSP00000112787"/>
<dbReference type="Allergome" id="478">
    <property type="allergen name" value="Mus m 1"/>
</dbReference>
<dbReference type="iPTMnet" id="P11588"/>
<dbReference type="PhosphoSitePlus" id="P11588"/>
<dbReference type="SwissPalm" id="P11588"/>
<dbReference type="jPOST" id="P11588"/>
<dbReference type="PaxDb" id="10090-ENSMUSP00000112787"/>
<dbReference type="Ensembl" id="ENSMUST00000117932.2">
    <property type="protein sequence ID" value="ENSMUSP00000112787.2"/>
    <property type="gene ID" value="ENSMUSG00000094793.2"/>
</dbReference>
<dbReference type="GeneID" id="100039054"/>
<dbReference type="KEGG" id="mmu:100039054"/>
<dbReference type="UCSC" id="uc008tay.3">
    <property type="organism name" value="mouse"/>
</dbReference>
<dbReference type="AGR" id="MGI:97233"/>
<dbReference type="CTD" id="100039054"/>
<dbReference type="MGI" id="MGI:97233">
    <property type="gene designation" value="Mup1"/>
</dbReference>
<dbReference type="VEuPathDB" id="HostDB:ENSMUSG00000094793"/>
<dbReference type="eggNOG" id="ENOG502S6GK">
    <property type="taxonomic scope" value="Eukaryota"/>
</dbReference>
<dbReference type="GeneTree" id="ENSGT01050000244868"/>
<dbReference type="HOGENOM" id="CLU_094061_4_0_1"/>
<dbReference type="InParanoid" id="P11588"/>
<dbReference type="PhylomeDB" id="P11588"/>
<dbReference type="TreeFam" id="TF338197"/>
<dbReference type="BioGRID-ORCS" id="100039054">
    <property type="hits" value="4 hits in 18 CRISPR screens"/>
</dbReference>
<dbReference type="ChiTaRS" id="Mup1">
    <property type="organism name" value="mouse"/>
</dbReference>
<dbReference type="EvolutionaryTrace" id="P11588"/>
<dbReference type="PRO" id="PR:P11588"/>
<dbReference type="Proteomes" id="UP000000589">
    <property type="component" value="Chromosome 4"/>
</dbReference>
<dbReference type="RNAct" id="P11588">
    <property type="molecule type" value="protein"/>
</dbReference>
<dbReference type="Bgee" id="ENSMUSG00000094793">
    <property type="expression patterns" value="Expressed in liver and 17 other cell types or tissues"/>
</dbReference>
<dbReference type="ExpressionAtlas" id="P11588">
    <property type="expression patterns" value="baseline and differential"/>
</dbReference>
<dbReference type="GO" id="GO:0005829">
    <property type="term" value="C:cytosol"/>
    <property type="evidence" value="ECO:0000314"/>
    <property type="project" value="UniProtKB"/>
</dbReference>
<dbReference type="GO" id="GO:0005615">
    <property type="term" value="C:extracellular space"/>
    <property type="evidence" value="ECO:0000314"/>
    <property type="project" value="UniProtKB"/>
</dbReference>
<dbReference type="GO" id="GO:0005634">
    <property type="term" value="C:nucleus"/>
    <property type="evidence" value="ECO:0000314"/>
    <property type="project" value="UniProtKB"/>
</dbReference>
<dbReference type="GO" id="GO:0005009">
    <property type="term" value="F:insulin receptor activity"/>
    <property type="evidence" value="ECO:0000314"/>
    <property type="project" value="UniProtKB"/>
</dbReference>
<dbReference type="GO" id="GO:0005186">
    <property type="term" value="F:pheromone activity"/>
    <property type="evidence" value="ECO:0000314"/>
    <property type="project" value="MGI"/>
</dbReference>
<dbReference type="GO" id="GO:0005550">
    <property type="term" value="F:pheromone binding"/>
    <property type="evidence" value="ECO:0000314"/>
    <property type="project" value="UniProtKB"/>
</dbReference>
<dbReference type="GO" id="GO:0036094">
    <property type="term" value="F:small molecule binding"/>
    <property type="evidence" value="ECO:0007669"/>
    <property type="project" value="InterPro"/>
</dbReference>
<dbReference type="GO" id="GO:0009060">
    <property type="term" value="P:aerobic respiration"/>
    <property type="evidence" value="ECO:0000314"/>
    <property type="project" value="UniProtKB"/>
</dbReference>
<dbReference type="GO" id="GO:0071240">
    <property type="term" value="P:cellular response to food"/>
    <property type="evidence" value="ECO:0000270"/>
    <property type="project" value="UniProtKB"/>
</dbReference>
<dbReference type="GO" id="GO:0071396">
    <property type="term" value="P:cellular response to lipid"/>
    <property type="evidence" value="ECO:0000314"/>
    <property type="project" value="UniProtKB"/>
</dbReference>
<dbReference type="GO" id="GO:0009267">
    <property type="term" value="P:cellular response to starvation"/>
    <property type="evidence" value="ECO:0000270"/>
    <property type="project" value="UniProtKB"/>
</dbReference>
<dbReference type="GO" id="GO:0071394">
    <property type="term" value="P:cellular response to testosterone stimulus"/>
    <property type="evidence" value="ECO:0000270"/>
    <property type="project" value="UniProtKB"/>
</dbReference>
<dbReference type="GO" id="GO:0006112">
    <property type="term" value="P:energy reserve metabolic process"/>
    <property type="evidence" value="ECO:0000314"/>
    <property type="project" value="UniProtKB"/>
</dbReference>
<dbReference type="GO" id="GO:0042593">
    <property type="term" value="P:glucose homeostasis"/>
    <property type="evidence" value="ECO:0000315"/>
    <property type="project" value="UniProtKB"/>
</dbReference>
<dbReference type="GO" id="GO:0031649">
    <property type="term" value="P:heat generation"/>
    <property type="evidence" value="ECO:0000314"/>
    <property type="project" value="UniProtKB"/>
</dbReference>
<dbReference type="GO" id="GO:0045475">
    <property type="term" value="P:locomotor rhythm"/>
    <property type="evidence" value="ECO:0000314"/>
    <property type="project" value="UniProtKB"/>
</dbReference>
<dbReference type="GO" id="GO:0007005">
    <property type="term" value="P:mitochondrion organization"/>
    <property type="evidence" value="ECO:0000314"/>
    <property type="project" value="UniProtKB"/>
</dbReference>
<dbReference type="GO" id="GO:0045892">
    <property type="term" value="P:negative regulation of DNA-templated transcription"/>
    <property type="evidence" value="ECO:0000314"/>
    <property type="project" value="UniProtKB"/>
</dbReference>
<dbReference type="GO" id="GO:0045721">
    <property type="term" value="P:negative regulation of gluconeogenesis"/>
    <property type="evidence" value="ECO:0000314"/>
    <property type="project" value="UniProtKB"/>
</dbReference>
<dbReference type="GO" id="GO:0061179">
    <property type="term" value="P:negative regulation of insulin secretion involved in cellular response to glucose stimulus"/>
    <property type="evidence" value="ECO:0000314"/>
    <property type="project" value="UniProtKB"/>
</dbReference>
<dbReference type="GO" id="GO:0051055">
    <property type="term" value="P:negative regulation of lipid biosynthetic process"/>
    <property type="evidence" value="ECO:0000314"/>
    <property type="project" value="UniProtKB"/>
</dbReference>
<dbReference type="GO" id="GO:0010888">
    <property type="term" value="P:negative regulation of lipid storage"/>
    <property type="evidence" value="ECO:0000314"/>
    <property type="project" value="UniProtKB"/>
</dbReference>
<dbReference type="GO" id="GO:0010628">
    <property type="term" value="P:positive regulation of gene expression"/>
    <property type="evidence" value="ECO:0000314"/>
    <property type="project" value="UniProtKB"/>
</dbReference>
<dbReference type="GO" id="GO:0010907">
    <property type="term" value="P:positive regulation of glucose metabolic process"/>
    <property type="evidence" value="ECO:0000314"/>
    <property type="project" value="UniProtKB"/>
</dbReference>
<dbReference type="GO" id="GO:0045834">
    <property type="term" value="P:positive regulation of lipid metabolic process"/>
    <property type="evidence" value="ECO:0000314"/>
    <property type="project" value="UniProtKB"/>
</dbReference>
<dbReference type="GO" id="GO:0051897">
    <property type="term" value="P:positive regulation of phosphatidylinositol 3-kinase/protein kinase B signal transduction"/>
    <property type="evidence" value="ECO:0000314"/>
    <property type="project" value="UniProtKB"/>
</dbReference>
<dbReference type="GO" id="GO:0035634">
    <property type="term" value="P:response to stilbenoid"/>
    <property type="evidence" value="ECO:0000270"/>
    <property type="project" value="UniProtKB"/>
</dbReference>
<dbReference type="CDD" id="cd19428">
    <property type="entry name" value="lipocalin_MUP-like"/>
    <property type="match status" value="1"/>
</dbReference>
<dbReference type="FunFam" id="2.40.128.20:FF:000008">
    <property type="entry name" value="Major urinary protein"/>
    <property type="match status" value="1"/>
</dbReference>
<dbReference type="Gene3D" id="2.40.128.20">
    <property type="match status" value="1"/>
</dbReference>
<dbReference type="InterPro" id="IPR012674">
    <property type="entry name" value="Calycin"/>
</dbReference>
<dbReference type="InterPro" id="IPR002345">
    <property type="entry name" value="Lipocalin"/>
</dbReference>
<dbReference type="InterPro" id="IPR022272">
    <property type="entry name" value="Lipocalin_CS"/>
</dbReference>
<dbReference type="InterPro" id="IPR000566">
    <property type="entry name" value="Lipocln_cytosolic_FA-bd_dom"/>
</dbReference>
<dbReference type="InterPro" id="IPR002971">
    <property type="entry name" value="Maj_urinary"/>
</dbReference>
<dbReference type="PANTHER" id="PTHR11430">
    <property type="entry name" value="LIPOCALIN"/>
    <property type="match status" value="1"/>
</dbReference>
<dbReference type="PANTHER" id="PTHR11430:SF76">
    <property type="entry name" value="MAJOR URINARY PROTEIN 1-RELATED"/>
    <property type="match status" value="1"/>
</dbReference>
<dbReference type="Pfam" id="PF00061">
    <property type="entry name" value="Lipocalin"/>
    <property type="match status" value="1"/>
</dbReference>
<dbReference type="PRINTS" id="PR00179">
    <property type="entry name" value="LIPOCALIN"/>
</dbReference>
<dbReference type="PRINTS" id="PR01221">
    <property type="entry name" value="MAJORURINARY"/>
</dbReference>
<dbReference type="SUPFAM" id="SSF50814">
    <property type="entry name" value="Lipocalins"/>
    <property type="match status" value="1"/>
</dbReference>
<dbReference type="PROSITE" id="PS00213">
    <property type="entry name" value="LIPOCALIN"/>
    <property type="match status" value="1"/>
</dbReference>
<name>MUP1_MOUSE</name>
<comment type="function">
    <text>Binds pheromones that are released from drying urine of males. These pheromones affect the sexual behavior of females.</text>
</comment>
<comment type="subcellular location">
    <subcellularLocation>
        <location>Secreted</location>
    </subcellularLocation>
</comment>
<comment type="tissue specificity">
    <text>Abundant in the urine of adult male mice but absent from that of females.</text>
</comment>
<comment type="similarity">
    <text evidence="1">Belongs to the calycin superfamily. Lipocalin family.</text>
</comment>
<comment type="sequence caution" evidence="1">
    <conflict type="erroneous initiation">
        <sequence resource="EMBL-CDS" id="AAA39764"/>
    </conflict>
</comment>
<proteinExistence type="evidence at protein level"/>